<organism>
    <name type="scientific">Wolbachia pipientis wMel</name>
    <dbReference type="NCBI Taxonomy" id="163164"/>
    <lineage>
        <taxon>Bacteria</taxon>
        <taxon>Pseudomonadati</taxon>
        <taxon>Pseudomonadota</taxon>
        <taxon>Alphaproteobacteria</taxon>
        <taxon>Rickettsiales</taxon>
        <taxon>Anaplasmataceae</taxon>
        <taxon>Wolbachieae</taxon>
        <taxon>Wolbachia</taxon>
    </lineage>
</organism>
<gene>
    <name evidence="1" type="primary">plsY</name>
    <name type="ordered locus">WD_1045</name>
</gene>
<evidence type="ECO:0000255" key="1">
    <source>
        <dbReference type="HAMAP-Rule" id="MF_01043"/>
    </source>
</evidence>
<feature type="chain" id="PRO_0000188490" description="Glycerol-3-phosphate acyltransferase">
    <location>
        <begin position="1"/>
        <end position="192"/>
    </location>
</feature>
<feature type="transmembrane region" description="Helical" evidence="1">
    <location>
        <begin position="5"/>
        <end position="25"/>
    </location>
</feature>
<feature type="transmembrane region" description="Helical" evidence="1">
    <location>
        <begin position="50"/>
        <end position="70"/>
    </location>
</feature>
<feature type="transmembrane region" description="Helical" evidence="1">
    <location>
        <begin position="78"/>
        <end position="98"/>
    </location>
</feature>
<feature type="transmembrane region" description="Helical" evidence="1">
    <location>
        <begin position="112"/>
        <end position="132"/>
    </location>
</feature>
<feature type="transmembrane region" description="Helical" evidence="1">
    <location>
        <begin position="153"/>
        <end position="173"/>
    </location>
</feature>
<protein>
    <recommendedName>
        <fullName evidence="1">Glycerol-3-phosphate acyltransferase</fullName>
    </recommendedName>
    <alternativeName>
        <fullName evidence="1">Acyl-PO4 G3P acyltransferase</fullName>
    </alternativeName>
    <alternativeName>
        <fullName evidence="1">Acyl-phosphate--glycerol-3-phosphate acyltransferase</fullName>
    </alternativeName>
    <alternativeName>
        <fullName evidence="1">G3P acyltransferase</fullName>
        <shortName evidence="1">GPAT</shortName>
        <ecNumber evidence="1">2.3.1.275</ecNumber>
    </alternativeName>
    <alternativeName>
        <fullName evidence="1">Lysophosphatidic acid synthase</fullName>
        <shortName evidence="1">LPA synthase</shortName>
    </alternativeName>
</protein>
<dbReference type="EC" id="2.3.1.275" evidence="1"/>
<dbReference type="EMBL" id="AE017196">
    <property type="protein sequence ID" value="AAS14702.1"/>
    <property type="molecule type" value="Genomic_DNA"/>
</dbReference>
<dbReference type="RefSeq" id="WP_010963004.1">
    <property type="nucleotide sequence ID" value="NZ_OX384529.1"/>
</dbReference>
<dbReference type="SMR" id="Q73GB4"/>
<dbReference type="EnsemblBacteria" id="AAS14702">
    <property type="protein sequence ID" value="AAS14702"/>
    <property type="gene ID" value="WD_1045"/>
</dbReference>
<dbReference type="GeneID" id="70036521"/>
<dbReference type="KEGG" id="wol:WD_1045"/>
<dbReference type="eggNOG" id="COG0344">
    <property type="taxonomic scope" value="Bacteria"/>
</dbReference>
<dbReference type="UniPathway" id="UPA00085"/>
<dbReference type="Proteomes" id="UP000008215">
    <property type="component" value="Chromosome"/>
</dbReference>
<dbReference type="GO" id="GO:0005886">
    <property type="term" value="C:plasma membrane"/>
    <property type="evidence" value="ECO:0007669"/>
    <property type="project" value="UniProtKB-SubCell"/>
</dbReference>
<dbReference type="GO" id="GO:0043772">
    <property type="term" value="F:acyl-phosphate glycerol-3-phosphate acyltransferase activity"/>
    <property type="evidence" value="ECO:0007669"/>
    <property type="project" value="UniProtKB-UniRule"/>
</dbReference>
<dbReference type="GO" id="GO:0008654">
    <property type="term" value="P:phospholipid biosynthetic process"/>
    <property type="evidence" value="ECO:0007669"/>
    <property type="project" value="UniProtKB-UniRule"/>
</dbReference>
<dbReference type="HAMAP" id="MF_01043">
    <property type="entry name" value="PlsY"/>
    <property type="match status" value="1"/>
</dbReference>
<dbReference type="InterPro" id="IPR003811">
    <property type="entry name" value="G3P_acylTferase_PlsY"/>
</dbReference>
<dbReference type="NCBIfam" id="TIGR00023">
    <property type="entry name" value="glycerol-3-phosphate 1-O-acyltransferase PlsY"/>
    <property type="match status" value="1"/>
</dbReference>
<dbReference type="PANTHER" id="PTHR30309:SF0">
    <property type="entry name" value="GLYCEROL-3-PHOSPHATE ACYLTRANSFERASE-RELATED"/>
    <property type="match status" value="1"/>
</dbReference>
<dbReference type="PANTHER" id="PTHR30309">
    <property type="entry name" value="INNER MEMBRANE PROTEIN YGIH"/>
    <property type="match status" value="1"/>
</dbReference>
<dbReference type="Pfam" id="PF02660">
    <property type="entry name" value="G3P_acyltransf"/>
    <property type="match status" value="1"/>
</dbReference>
<dbReference type="SMART" id="SM01207">
    <property type="entry name" value="G3P_acyltransf"/>
    <property type="match status" value="1"/>
</dbReference>
<accession>Q73GB4</accession>
<keyword id="KW-1003">Cell membrane</keyword>
<keyword id="KW-0444">Lipid biosynthesis</keyword>
<keyword id="KW-0443">Lipid metabolism</keyword>
<keyword id="KW-0472">Membrane</keyword>
<keyword id="KW-0594">Phospholipid biosynthesis</keyword>
<keyword id="KW-1208">Phospholipid metabolism</keyword>
<keyword id="KW-0808">Transferase</keyword>
<keyword id="KW-0812">Transmembrane</keyword>
<keyword id="KW-1133">Transmembrane helix</keyword>
<reference key="1">
    <citation type="journal article" date="2004" name="PLoS Biol.">
        <title>Phylogenomics of the reproductive parasite Wolbachia pipientis wMel: a streamlined genome overrun by mobile genetic elements.</title>
        <authorList>
            <person name="Wu M."/>
            <person name="Sun L.V."/>
            <person name="Vamathevan J.J."/>
            <person name="Riegler M."/>
            <person name="DeBoy R.T."/>
            <person name="Brownlie J.C."/>
            <person name="McGraw E.A."/>
            <person name="Martin W."/>
            <person name="Esser C."/>
            <person name="Ahmadinejad N."/>
            <person name="Wiegand C."/>
            <person name="Madupu R."/>
            <person name="Beanan M.J."/>
            <person name="Brinkac L.M."/>
            <person name="Daugherty S.C."/>
            <person name="Durkin A.S."/>
            <person name="Kolonay J.F."/>
            <person name="Nelson W.C."/>
            <person name="Mohamoud Y."/>
            <person name="Lee P."/>
            <person name="Berry K.J."/>
            <person name="Young M.B."/>
            <person name="Utterback T.R."/>
            <person name="Weidman J.F."/>
            <person name="Nierman W.C."/>
            <person name="Paulsen I.T."/>
            <person name="Nelson K.E."/>
            <person name="Tettelin H."/>
            <person name="O'Neill S.L."/>
            <person name="Eisen J.A."/>
        </authorList>
    </citation>
    <scope>NUCLEOTIDE SEQUENCE [LARGE SCALE GENOMIC DNA]</scope>
</reference>
<name>PLSY_WOLPM</name>
<proteinExistence type="inferred from homology"/>
<comment type="function">
    <text evidence="1">Catalyzes the transfer of an acyl group from acyl-phosphate (acyl-PO(4)) to glycerol-3-phosphate (G3P) to form lysophosphatidic acid (LPA). This enzyme utilizes acyl-phosphate as fatty acyl donor, but not acyl-CoA or acyl-ACP.</text>
</comment>
<comment type="catalytic activity">
    <reaction evidence="1">
        <text>an acyl phosphate + sn-glycerol 3-phosphate = a 1-acyl-sn-glycero-3-phosphate + phosphate</text>
        <dbReference type="Rhea" id="RHEA:34075"/>
        <dbReference type="ChEBI" id="CHEBI:43474"/>
        <dbReference type="ChEBI" id="CHEBI:57597"/>
        <dbReference type="ChEBI" id="CHEBI:57970"/>
        <dbReference type="ChEBI" id="CHEBI:59918"/>
        <dbReference type="EC" id="2.3.1.275"/>
    </reaction>
</comment>
<comment type="pathway">
    <text evidence="1">Lipid metabolism; phospholipid metabolism.</text>
</comment>
<comment type="subunit">
    <text evidence="1">Probably interacts with PlsX.</text>
</comment>
<comment type="subcellular location">
    <subcellularLocation>
        <location evidence="1">Cell membrane</location>
        <topology evidence="1">Multi-pass membrane protein</topology>
    </subcellularLocation>
</comment>
<comment type="similarity">
    <text evidence="1">Belongs to the PlsY family.</text>
</comment>
<sequence>MEKYVVLILSYILGSIPFSLIITRIKGINLREVGSGNIGATNVARTGNKFLAALALFLDSFKGFIAVYIAQQFCDNNDFYIYVSAILAVLGHMFPIWLKFSGGKGVATTLGILIAFNIDITLVFVIIWIIVFLAFRYSSLASLSATSTAVAWSFFFQRNLFLTLLIIGALVFLKHHRNIVNLLQGKEYKFYR</sequence>